<comment type="function">
    <text evidence="7 8">Serine/threonine kinase which acts as a component of the MAP kinase signal transduction pathway (PubMed:20362554, PubMed:26732173). Once activated, acts as an upstream activator of the p38 MAPK signal transduction cascade through the phosphorylation and activation of several MAP kinase kinases (PubMed:20362554, PubMed:26732173). May function in a signal transduction pathway that is activated by various cell stresses and leads to apoptosis (PubMed:20362554). Involved in phosphorylation of WNK4 in response to osmotic stress or hypotonic low-chloride stimulation via the p38 MAPK signal transduction cascade (PubMed:26732173).</text>
</comment>
<comment type="catalytic activity">
    <reaction evidence="7 8">
        <text>L-seryl-[protein] + ATP = O-phospho-L-seryl-[protein] + ADP + H(+)</text>
        <dbReference type="Rhea" id="RHEA:17989"/>
        <dbReference type="Rhea" id="RHEA-COMP:9863"/>
        <dbReference type="Rhea" id="RHEA-COMP:11604"/>
        <dbReference type="ChEBI" id="CHEBI:15378"/>
        <dbReference type="ChEBI" id="CHEBI:29999"/>
        <dbReference type="ChEBI" id="CHEBI:30616"/>
        <dbReference type="ChEBI" id="CHEBI:83421"/>
        <dbReference type="ChEBI" id="CHEBI:456216"/>
        <dbReference type="EC" id="2.7.11.25"/>
    </reaction>
</comment>
<comment type="catalytic activity">
    <reaction evidence="7">
        <text>L-threonyl-[protein] + ATP = O-phospho-L-threonyl-[protein] + ADP + H(+)</text>
        <dbReference type="Rhea" id="RHEA:46608"/>
        <dbReference type="Rhea" id="RHEA-COMP:11060"/>
        <dbReference type="Rhea" id="RHEA-COMP:11605"/>
        <dbReference type="ChEBI" id="CHEBI:15378"/>
        <dbReference type="ChEBI" id="CHEBI:30013"/>
        <dbReference type="ChEBI" id="CHEBI:30616"/>
        <dbReference type="ChEBI" id="CHEBI:61977"/>
        <dbReference type="ChEBI" id="CHEBI:456216"/>
        <dbReference type="EC" id="2.7.11.25"/>
    </reaction>
</comment>
<comment type="cofactor">
    <cofactor evidence="1">
        <name>Mg(2+)</name>
        <dbReference type="ChEBI" id="CHEBI:18420"/>
    </cofactor>
</comment>
<comment type="activity regulation">
    <text evidence="1">Contains an N-terminal autoinhibitory domain. Activated by phosphorylation at Thr-812, inhibited by phosphorylation at Ser-924 and Ser-994 (By similarity).</text>
</comment>
<comment type="alternative products">
    <event type="alternative splicing"/>
    <isoform>
        <id>Q6ZN16-1</id>
        <name>1</name>
        <sequence type="displayed"/>
    </isoform>
    <isoform>
        <id>Q6ZN16-2</id>
        <name>2</name>
        <sequence type="described" ref="VSP_021038"/>
    </isoform>
    <isoform>
        <id>Q6ZN16-3</id>
        <name>3</name>
        <sequence type="described" ref="VSP_021039 VSP_021040"/>
    </isoform>
</comment>
<comment type="tissue specificity">
    <text evidence="7">Isoform 2 and isoform 3 are widely expressed. Isoform 2 highest levels are observed in fetal brain, and isoform 3 highest levels in pancreas, peripheral blood leukocytes, fetal brain and spleen.</text>
</comment>
<comment type="similarity">
    <text evidence="10">Belongs to the protein kinase superfamily. STE Ser/Thr protein kinase family. MAP kinase kinase kinase subfamily.</text>
</comment>
<organism>
    <name type="scientific">Homo sapiens</name>
    <name type="common">Human</name>
    <dbReference type="NCBI Taxonomy" id="9606"/>
    <lineage>
        <taxon>Eukaryota</taxon>
        <taxon>Metazoa</taxon>
        <taxon>Chordata</taxon>
        <taxon>Craniata</taxon>
        <taxon>Vertebrata</taxon>
        <taxon>Euteleostomi</taxon>
        <taxon>Mammalia</taxon>
        <taxon>Eutheria</taxon>
        <taxon>Euarchontoglires</taxon>
        <taxon>Primates</taxon>
        <taxon>Haplorrhini</taxon>
        <taxon>Catarrhini</taxon>
        <taxon>Hominidae</taxon>
        <taxon>Homo</taxon>
    </lineage>
</organism>
<reference key="1">
    <citation type="journal article" date="2004" name="Nat. Genet.">
        <title>Complete sequencing and characterization of 21,243 full-length human cDNAs.</title>
        <authorList>
            <person name="Ota T."/>
            <person name="Suzuki Y."/>
            <person name="Nishikawa T."/>
            <person name="Otsuki T."/>
            <person name="Sugiyama T."/>
            <person name="Irie R."/>
            <person name="Wakamatsu A."/>
            <person name="Hayashi K."/>
            <person name="Sato H."/>
            <person name="Nagai K."/>
            <person name="Kimura K."/>
            <person name="Makita H."/>
            <person name="Sekine M."/>
            <person name="Obayashi M."/>
            <person name="Nishi T."/>
            <person name="Shibahara T."/>
            <person name="Tanaka T."/>
            <person name="Ishii S."/>
            <person name="Yamamoto J."/>
            <person name="Saito K."/>
            <person name="Kawai Y."/>
            <person name="Isono Y."/>
            <person name="Nakamura Y."/>
            <person name="Nagahari K."/>
            <person name="Murakami K."/>
            <person name="Yasuda T."/>
            <person name="Iwayanagi T."/>
            <person name="Wagatsuma M."/>
            <person name="Shiratori A."/>
            <person name="Sudo H."/>
            <person name="Hosoiri T."/>
            <person name="Kaku Y."/>
            <person name="Kodaira H."/>
            <person name="Kondo H."/>
            <person name="Sugawara M."/>
            <person name="Takahashi M."/>
            <person name="Kanda K."/>
            <person name="Yokoi T."/>
            <person name="Furuya T."/>
            <person name="Kikkawa E."/>
            <person name="Omura Y."/>
            <person name="Abe K."/>
            <person name="Kamihara K."/>
            <person name="Katsuta N."/>
            <person name="Sato K."/>
            <person name="Tanikawa M."/>
            <person name="Yamazaki M."/>
            <person name="Ninomiya K."/>
            <person name="Ishibashi T."/>
            <person name="Yamashita H."/>
            <person name="Murakawa K."/>
            <person name="Fujimori K."/>
            <person name="Tanai H."/>
            <person name="Kimata M."/>
            <person name="Watanabe M."/>
            <person name="Hiraoka S."/>
            <person name="Chiba Y."/>
            <person name="Ishida S."/>
            <person name="Ono Y."/>
            <person name="Takiguchi S."/>
            <person name="Watanabe S."/>
            <person name="Yosida M."/>
            <person name="Hotuta T."/>
            <person name="Kusano J."/>
            <person name="Kanehori K."/>
            <person name="Takahashi-Fujii A."/>
            <person name="Hara H."/>
            <person name="Tanase T.-O."/>
            <person name="Nomura Y."/>
            <person name="Togiya S."/>
            <person name="Komai F."/>
            <person name="Hara R."/>
            <person name="Takeuchi K."/>
            <person name="Arita M."/>
            <person name="Imose N."/>
            <person name="Musashino K."/>
            <person name="Yuuki H."/>
            <person name="Oshima A."/>
            <person name="Sasaki N."/>
            <person name="Aotsuka S."/>
            <person name="Yoshikawa Y."/>
            <person name="Matsunawa H."/>
            <person name="Ichihara T."/>
            <person name="Shiohata N."/>
            <person name="Sano S."/>
            <person name="Moriya S."/>
            <person name="Momiyama H."/>
            <person name="Satoh N."/>
            <person name="Takami S."/>
            <person name="Terashima Y."/>
            <person name="Suzuki O."/>
            <person name="Nakagawa S."/>
            <person name="Senoh A."/>
            <person name="Mizoguchi H."/>
            <person name="Goto Y."/>
            <person name="Shimizu F."/>
            <person name="Wakebe H."/>
            <person name="Hishigaki H."/>
            <person name="Watanabe T."/>
            <person name="Sugiyama A."/>
            <person name="Takemoto M."/>
            <person name="Kawakami B."/>
            <person name="Yamazaki M."/>
            <person name="Watanabe K."/>
            <person name="Kumagai A."/>
            <person name="Itakura S."/>
            <person name="Fukuzumi Y."/>
            <person name="Fujimori Y."/>
            <person name="Komiyama M."/>
            <person name="Tashiro H."/>
            <person name="Tanigami A."/>
            <person name="Fujiwara T."/>
            <person name="Ono T."/>
            <person name="Yamada K."/>
            <person name="Fujii Y."/>
            <person name="Ozaki K."/>
            <person name="Hirao M."/>
            <person name="Ohmori Y."/>
            <person name="Kawabata A."/>
            <person name="Hikiji T."/>
            <person name="Kobatake N."/>
            <person name="Inagaki H."/>
            <person name="Ikema Y."/>
            <person name="Okamoto S."/>
            <person name="Okitani R."/>
            <person name="Kawakami T."/>
            <person name="Noguchi S."/>
            <person name="Itoh T."/>
            <person name="Shigeta K."/>
            <person name="Senba T."/>
            <person name="Matsumura K."/>
            <person name="Nakajima Y."/>
            <person name="Mizuno T."/>
            <person name="Morinaga M."/>
            <person name="Sasaki M."/>
            <person name="Togashi T."/>
            <person name="Oyama M."/>
            <person name="Hata H."/>
            <person name="Watanabe M."/>
            <person name="Komatsu T."/>
            <person name="Mizushima-Sugano J."/>
            <person name="Satoh T."/>
            <person name="Shirai Y."/>
            <person name="Takahashi Y."/>
            <person name="Nakagawa K."/>
            <person name="Okumura K."/>
            <person name="Nagase T."/>
            <person name="Nomura N."/>
            <person name="Kikuchi H."/>
            <person name="Masuho Y."/>
            <person name="Yamashita R."/>
            <person name="Nakai K."/>
            <person name="Yada T."/>
            <person name="Nakamura Y."/>
            <person name="Ohara O."/>
            <person name="Isogai T."/>
            <person name="Sugano S."/>
        </authorList>
    </citation>
    <scope>NUCLEOTIDE SEQUENCE [LARGE SCALE MRNA] (ISOFORMS 2 AND 3)</scope>
    <source>
        <tissue>Teratocarcinoma</tissue>
        <tissue>Testis</tissue>
    </source>
</reference>
<reference key="2">
    <citation type="journal article" date="2005" name="Nature">
        <title>The DNA sequence of the human X chromosome.</title>
        <authorList>
            <person name="Ross M.T."/>
            <person name="Grafham D.V."/>
            <person name="Coffey A.J."/>
            <person name="Scherer S."/>
            <person name="McLay K."/>
            <person name="Muzny D."/>
            <person name="Platzer M."/>
            <person name="Howell G.R."/>
            <person name="Burrows C."/>
            <person name="Bird C.P."/>
            <person name="Frankish A."/>
            <person name="Lovell F.L."/>
            <person name="Howe K.L."/>
            <person name="Ashurst J.L."/>
            <person name="Fulton R.S."/>
            <person name="Sudbrak R."/>
            <person name="Wen G."/>
            <person name="Jones M.C."/>
            <person name="Hurles M.E."/>
            <person name="Andrews T.D."/>
            <person name="Scott C.E."/>
            <person name="Searle S."/>
            <person name="Ramser J."/>
            <person name="Whittaker A."/>
            <person name="Deadman R."/>
            <person name="Carter N.P."/>
            <person name="Hunt S.E."/>
            <person name="Chen R."/>
            <person name="Cree A."/>
            <person name="Gunaratne P."/>
            <person name="Havlak P."/>
            <person name="Hodgson A."/>
            <person name="Metzker M.L."/>
            <person name="Richards S."/>
            <person name="Scott G."/>
            <person name="Steffen D."/>
            <person name="Sodergren E."/>
            <person name="Wheeler D.A."/>
            <person name="Worley K.C."/>
            <person name="Ainscough R."/>
            <person name="Ambrose K.D."/>
            <person name="Ansari-Lari M.A."/>
            <person name="Aradhya S."/>
            <person name="Ashwell R.I."/>
            <person name="Babbage A.K."/>
            <person name="Bagguley C.L."/>
            <person name="Ballabio A."/>
            <person name="Banerjee R."/>
            <person name="Barker G.E."/>
            <person name="Barlow K.F."/>
            <person name="Barrett I.P."/>
            <person name="Bates K.N."/>
            <person name="Beare D.M."/>
            <person name="Beasley H."/>
            <person name="Beasley O."/>
            <person name="Beck A."/>
            <person name="Bethel G."/>
            <person name="Blechschmidt K."/>
            <person name="Brady N."/>
            <person name="Bray-Allen S."/>
            <person name="Bridgeman A.M."/>
            <person name="Brown A.J."/>
            <person name="Brown M.J."/>
            <person name="Bonnin D."/>
            <person name="Bruford E.A."/>
            <person name="Buhay C."/>
            <person name="Burch P."/>
            <person name="Burford D."/>
            <person name="Burgess J."/>
            <person name="Burrill W."/>
            <person name="Burton J."/>
            <person name="Bye J.M."/>
            <person name="Carder C."/>
            <person name="Carrel L."/>
            <person name="Chako J."/>
            <person name="Chapman J.C."/>
            <person name="Chavez D."/>
            <person name="Chen E."/>
            <person name="Chen G."/>
            <person name="Chen Y."/>
            <person name="Chen Z."/>
            <person name="Chinault C."/>
            <person name="Ciccodicola A."/>
            <person name="Clark S.Y."/>
            <person name="Clarke G."/>
            <person name="Clee C.M."/>
            <person name="Clegg S."/>
            <person name="Clerc-Blankenburg K."/>
            <person name="Clifford K."/>
            <person name="Cobley V."/>
            <person name="Cole C.G."/>
            <person name="Conquer J.S."/>
            <person name="Corby N."/>
            <person name="Connor R.E."/>
            <person name="David R."/>
            <person name="Davies J."/>
            <person name="Davis C."/>
            <person name="Davis J."/>
            <person name="Delgado O."/>
            <person name="Deshazo D."/>
            <person name="Dhami P."/>
            <person name="Ding Y."/>
            <person name="Dinh H."/>
            <person name="Dodsworth S."/>
            <person name="Draper H."/>
            <person name="Dugan-Rocha S."/>
            <person name="Dunham A."/>
            <person name="Dunn M."/>
            <person name="Durbin K.J."/>
            <person name="Dutta I."/>
            <person name="Eades T."/>
            <person name="Ellwood M."/>
            <person name="Emery-Cohen A."/>
            <person name="Errington H."/>
            <person name="Evans K.L."/>
            <person name="Faulkner L."/>
            <person name="Francis F."/>
            <person name="Frankland J."/>
            <person name="Fraser A.E."/>
            <person name="Galgoczy P."/>
            <person name="Gilbert J."/>
            <person name="Gill R."/>
            <person name="Gloeckner G."/>
            <person name="Gregory S.G."/>
            <person name="Gribble S."/>
            <person name="Griffiths C."/>
            <person name="Grocock R."/>
            <person name="Gu Y."/>
            <person name="Gwilliam R."/>
            <person name="Hamilton C."/>
            <person name="Hart E.A."/>
            <person name="Hawes A."/>
            <person name="Heath P.D."/>
            <person name="Heitmann K."/>
            <person name="Hennig S."/>
            <person name="Hernandez J."/>
            <person name="Hinzmann B."/>
            <person name="Ho S."/>
            <person name="Hoffs M."/>
            <person name="Howden P.J."/>
            <person name="Huckle E.J."/>
            <person name="Hume J."/>
            <person name="Hunt P.J."/>
            <person name="Hunt A.R."/>
            <person name="Isherwood J."/>
            <person name="Jacob L."/>
            <person name="Johnson D."/>
            <person name="Jones S."/>
            <person name="de Jong P.J."/>
            <person name="Joseph S.S."/>
            <person name="Keenan S."/>
            <person name="Kelly S."/>
            <person name="Kershaw J.K."/>
            <person name="Khan Z."/>
            <person name="Kioschis P."/>
            <person name="Klages S."/>
            <person name="Knights A.J."/>
            <person name="Kosiura A."/>
            <person name="Kovar-Smith C."/>
            <person name="Laird G.K."/>
            <person name="Langford C."/>
            <person name="Lawlor S."/>
            <person name="Leversha M."/>
            <person name="Lewis L."/>
            <person name="Liu W."/>
            <person name="Lloyd C."/>
            <person name="Lloyd D.M."/>
            <person name="Loulseged H."/>
            <person name="Loveland J.E."/>
            <person name="Lovell J.D."/>
            <person name="Lozado R."/>
            <person name="Lu J."/>
            <person name="Lyne R."/>
            <person name="Ma J."/>
            <person name="Maheshwari M."/>
            <person name="Matthews L.H."/>
            <person name="McDowall J."/>
            <person name="McLaren S."/>
            <person name="McMurray A."/>
            <person name="Meidl P."/>
            <person name="Meitinger T."/>
            <person name="Milne S."/>
            <person name="Miner G."/>
            <person name="Mistry S.L."/>
            <person name="Morgan M."/>
            <person name="Morris S."/>
            <person name="Mueller I."/>
            <person name="Mullikin J.C."/>
            <person name="Nguyen N."/>
            <person name="Nordsiek G."/>
            <person name="Nyakatura G."/>
            <person name="O'dell C.N."/>
            <person name="Okwuonu G."/>
            <person name="Palmer S."/>
            <person name="Pandian R."/>
            <person name="Parker D."/>
            <person name="Parrish J."/>
            <person name="Pasternak S."/>
            <person name="Patel D."/>
            <person name="Pearce A.V."/>
            <person name="Pearson D.M."/>
            <person name="Pelan S.E."/>
            <person name="Perez L."/>
            <person name="Porter K.M."/>
            <person name="Ramsey Y."/>
            <person name="Reichwald K."/>
            <person name="Rhodes S."/>
            <person name="Ridler K.A."/>
            <person name="Schlessinger D."/>
            <person name="Schueler M.G."/>
            <person name="Sehra H.K."/>
            <person name="Shaw-Smith C."/>
            <person name="Shen H."/>
            <person name="Sheridan E.M."/>
            <person name="Shownkeen R."/>
            <person name="Skuce C.D."/>
            <person name="Smith M.L."/>
            <person name="Sotheran E.C."/>
            <person name="Steingruber H.E."/>
            <person name="Steward C.A."/>
            <person name="Storey R."/>
            <person name="Swann R.M."/>
            <person name="Swarbreck D."/>
            <person name="Tabor P.E."/>
            <person name="Taudien S."/>
            <person name="Taylor T."/>
            <person name="Teague B."/>
            <person name="Thomas K."/>
            <person name="Thorpe A."/>
            <person name="Timms K."/>
            <person name="Tracey A."/>
            <person name="Trevanion S."/>
            <person name="Tromans A.C."/>
            <person name="d'Urso M."/>
            <person name="Verduzco D."/>
            <person name="Villasana D."/>
            <person name="Waldron L."/>
            <person name="Wall M."/>
            <person name="Wang Q."/>
            <person name="Warren J."/>
            <person name="Warry G.L."/>
            <person name="Wei X."/>
            <person name="West A."/>
            <person name="Whitehead S.L."/>
            <person name="Whiteley M.N."/>
            <person name="Wilkinson J.E."/>
            <person name="Willey D.L."/>
            <person name="Williams G."/>
            <person name="Williams L."/>
            <person name="Williamson A."/>
            <person name="Williamson H."/>
            <person name="Wilming L."/>
            <person name="Woodmansey R.L."/>
            <person name="Wray P.W."/>
            <person name="Yen J."/>
            <person name="Zhang J."/>
            <person name="Zhou J."/>
            <person name="Zoghbi H."/>
            <person name="Zorilla S."/>
            <person name="Buck D."/>
            <person name="Reinhardt R."/>
            <person name="Poustka A."/>
            <person name="Rosenthal A."/>
            <person name="Lehrach H."/>
            <person name="Meindl A."/>
            <person name="Minx P.J."/>
            <person name="Hillier L.W."/>
            <person name="Willard H.F."/>
            <person name="Wilson R.K."/>
            <person name="Waterston R.H."/>
            <person name="Rice C.M."/>
            <person name="Vaudin M."/>
            <person name="Coulson A."/>
            <person name="Nelson D.L."/>
            <person name="Weinstock G."/>
            <person name="Sulston J.E."/>
            <person name="Durbin R.M."/>
            <person name="Hubbard T."/>
            <person name="Gibbs R.A."/>
            <person name="Beck S."/>
            <person name="Rogers J."/>
            <person name="Bentley D.R."/>
        </authorList>
    </citation>
    <scope>NUCLEOTIDE SEQUENCE [LARGE SCALE GENOMIC DNA]</scope>
</reference>
<reference key="3">
    <citation type="journal article" date="2009" name="Mol. Cell. Proteomics">
        <title>Large-scale proteomics analysis of the human kinome.</title>
        <authorList>
            <person name="Oppermann F.S."/>
            <person name="Gnad F."/>
            <person name="Olsen J.V."/>
            <person name="Hornberger R."/>
            <person name="Greff Z."/>
            <person name="Keri G."/>
            <person name="Mann M."/>
            <person name="Daub H."/>
        </authorList>
    </citation>
    <scope>IDENTIFICATION BY MASS SPECTROMETRY [LARGE SCALE ANALYSIS]</scope>
</reference>
<reference key="4">
    <citation type="journal article" date="2010" name="Biochem. Biophys. Res. Commun.">
        <title>ASK3, a novel member of the apoptosis signal-regulating kinase family, is essential for stress-induced cell death in HeLa cells.</title>
        <authorList>
            <person name="Kaji T."/>
            <person name="Yoshida S."/>
            <person name="Kawai K."/>
            <person name="Fuchigami Y."/>
            <person name="Watanabe W."/>
            <person name="Kubodera H."/>
            <person name="Kishimoto T."/>
        </authorList>
    </citation>
    <scope>FUNCTION</scope>
    <scope>CATALYTIC ACTIVITY</scope>
    <scope>TISSUE SPECIFICITY</scope>
</reference>
<reference key="5">
    <citation type="journal article" date="2013" name="J. Proteome Res.">
        <title>Toward a comprehensive characterization of a human cancer cell phosphoproteome.</title>
        <authorList>
            <person name="Zhou H."/>
            <person name="Di Palma S."/>
            <person name="Preisinger C."/>
            <person name="Peng M."/>
            <person name="Polat A.N."/>
            <person name="Heck A.J."/>
            <person name="Mohammed S."/>
        </authorList>
    </citation>
    <scope>PHOSPHORYLATION [LARGE SCALE ANALYSIS] AT SER-994</scope>
    <scope>IDENTIFICATION BY MASS SPECTROMETRY [LARGE SCALE ANALYSIS]</scope>
    <source>
        <tissue>Cervix carcinoma</tissue>
    </source>
</reference>
<reference key="6">
    <citation type="journal article" date="2016" name="Sci. Rep.">
        <title>Osmotic stress induces the phosphorylation of WNK4 Ser575 via the p38MAPK-MK pathway.</title>
        <authorList>
            <person name="Maruyama J."/>
            <person name="Kobayashi Y."/>
            <person name="Umeda T."/>
            <person name="Vandewalle A."/>
            <person name="Takeda K."/>
            <person name="Ichijo H."/>
            <person name="Naguro I."/>
        </authorList>
    </citation>
    <scope>FUNCTION</scope>
    <scope>CATALYTIC ACTIVITY</scope>
    <scope>MUTAGENESIS OF LYS-681</scope>
</reference>
<reference key="7">
    <citation type="journal article" date="2007" name="Nature">
        <title>Patterns of somatic mutation in human cancer genomes.</title>
        <authorList>
            <person name="Greenman C."/>
            <person name="Stephens P."/>
            <person name="Smith R."/>
            <person name="Dalgliesh G.L."/>
            <person name="Hunter C."/>
            <person name="Bignell G."/>
            <person name="Davies H."/>
            <person name="Teague J."/>
            <person name="Butler A."/>
            <person name="Stevens C."/>
            <person name="Edkins S."/>
            <person name="O'Meara S."/>
            <person name="Vastrik I."/>
            <person name="Schmidt E.E."/>
            <person name="Avis T."/>
            <person name="Barthorpe S."/>
            <person name="Bhamra G."/>
            <person name="Buck G."/>
            <person name="Choudhury B."/>
            <person name="Clements J."/>
            <person name="Cole J."/>
            <person name="Dicks E."/>
            <person name="Forbes S."/>
            <person name="Gray K."/>
            <person name="Halliday K."/>
            <person name="Harrison R."/>
            <person name="Hills K."/>
            <person name="Hinton J."/>
            <person name="Jenkinson A."/>
            <person name="Jones D."/>
            <person name="Menzies A."/>
            <person name="Mironenko T."/>
            <person name="Perry J."/>
            <person name="Raine K."/>
            <person name="Richardson D."/>
            <person name="Shepherd R."/>
            <person name="Small A."/>
            <person name="Tofts C."/>
            <person name="Varian J."/>
            <person name="Webb T."/>
            <person name="West S."/>
            <person name="Widaa S."/>
            <person name="Yates A."/>
            <person name="Cahill D.P."/>
            <person name="Louis D.N."/>
            <person name="Goldstraw P."/>
            <person name="Nicholson A.G."/>
            <person name="Brasseur F."/>
            <person name="Looijenga L."/>
            <person name="Weber B.L."/>
            <person name="Chiew Y.-E."/>
            <person name="DeFazio A."/>
            <person name="Greaves M.F."/>
            <person name="Green A.R."/>
            <person name="Campbell P."/>
            <person name="Birney E."/>
            <person name="Easton D.F."/>
            <person name="Chenevix-Trench G."/>
            <person name="Tan M.-H."/>
            <person name="Khoo S.K."/>
            <person name="Teh B.T."/>
            <person name="Yuen S.T."/>
            <person name="Leung S.Y."/>
            <person name="Wooster R."/>
            <person name="Futreal P.A."/>
            <person name="Stratton M.R."/>
        </authorList>
    </citation>
    <scope>VARIANTS [LARGE SCALE ANALYSIS] THR-192; ASN-199; HIS-226; SER-255; GLY-456; CYS-494; LEU-562; GLN-677; SER-838; LEU-993; HIS-1029; ARG-1247 AND GLU-1251</scope>
</reference>
<dbReference type="EC" id="2.7.11.25" evidence="7 8"/>
<dbReference type="EMBL" id="AK131412">
    <property type="protein sequence ID" value="BAD18559.1"/>
    <property type="molecule type" value="mRNA"/>
</dbReference>
<dbReference type="EMBL" id="AK131477">
    <property type="protein sequence ID" value="BAD18622.1"/>
    <property type="molecule type" value="mRNA"/>
</dbReference>
<dbReference type="EMBL" id="AL732326">
    <property type="status" value="NOT_ANNOTATED_CDS"/>
    <property type="molecule type" value="Genomic_DNA"/>
</dbReference>
<dbReference type="EMBL" id="AL732423">
    <property type="status" value="NOT_ANNOTATED_CDS"/>
    <property type="molecule type" value="Genomic_DNA"/>
</dbReference>
<dbReference type="CCDS" id="CCDS35212.2">
    <molecule id="Q6ZN16-1"/>
</dbReference>
<dbReference type="RefSeq" id="NP_001001671.3">
    <molecule id="Q6ZN16-1"/>
    <property type="nucleotide sequence ID" value="NM_001001671.4"/>
</dbReference>
<dbReference type="RefSeq" id="XP_011543813.1">
    <molecule id="Q6ZN16-2"/>
    <property type="nucleotide sequence ID" value="XM_011545511.2"/>
</dbReference>
<dbReference type="RefSeq" id="XP_054183016.1">
    <molecule id="Q6ZN16-2"/>
    <property type="nucleotide sequence ID" value="XM_054327041.1"/>
</dbReference>
<dbReference type="PDB" id="6V0M">
    <property type="method" value="X-ray"/>
    <property type="resolution" value="1.80 A"/>
    <property type="chains" value="A/B/C=1241-1308"/>
</dbReference>
<dbReference type="PDBsum" id="6V0M"/>
<dbReference type="SMR" id="Q6ZN16"/>
<dbReference type="BioGRID" id="133293">
    <property type="interactions" value="22"/>
</dbReference>
<dbReference type="FunCoup" id="Q6ZN16">
    <property type="interactions" value="177"/>
</dbReference>
<dbReference type="IntAct" id="Q6ZN16">
    <property type="interactions" value="9"/>
</dbReference>
<dbReference type="STRING" id="9606.ENSP00000345629"/>
<dbReference type="BindingDB" id="Q6ZN16"/>
<dbReference type="ChEMBL" id="CHEMBL1163127"/>
<dbReference type="DrugBank" id="DB12010">
    <property type="generic name" value="Fostamatinib"/>
</dbReference>
<dbReference type="DrugCentral" id="Q6ZN16"/>
<dbReference type="GlyGen" id="Q6ZN16">
    <property type="glycosylation" value="1 site, 1 O-linked glycan (1 site)"/>
</dbReference>
<dbReference type="iPTMnet" id="Q6ZN16"/>
<dbReference type="PhosphoSitePlus" id="Q6ZN16"/>
<dbReference type="BioMuta" id="MAP3K15"/>
<dbReference type="DMDM" id="116248533"/>
<dbReference type="CPTAC" id="CPTAC-841"/>
<dbReference type="CPTAC" id="CPTAC-842"/>
<dbReference type="jPOST" id="Q6ZN16"/>
<dbReference type="MassIVE" id="Q6ZN16"/>
<dbReference type="PaxDb" id="9606-ENSP00000345629"/>
<dbReference type="PeptideAtlas" id="Q6ZN16"/>
<dbReference type="ProteomicsDB" id="67956">
    <molecule id="Q6ZN16-1"/>
</dbReference>
<dbReference type="ProteomicsDB" id="67957">
    <molecule id="Q6ZN16-2"/>
</dbReference>
<dbReference type="ProteomicsDB" id="67958">
    <molecule id="Q6ZN16-3"/>
</dbReference>
<dbReference type="Antibodypedia" id="571">
    <property type="antibodies" value="146 antibodies from 26 providers"/>
</dbReference>
<dbReference type="DNASU" id="389840"/>
<dbReference type="Ensembl" id="ENST00000338883.9">
    <molecule id="Q6ZN16-1"/>
    <property type="protein sequence ID" value="ENSP00000345629.4"/>
    <property type="gene ID" value="ENSG00000180815.15"/>
</dbReference>
<dbReference type="GeneID" id="389840"/>
<dbReference type="KEGG" id="hsa:389840"/>
<dbReference type="MANE-Select" id="ENST00000338883.9">
    <property type="protein sequence ID" value="ENSP00000345629.4"/>
    <property type="RefSeq nucleotide sequence ID" value="NM_001001671.4"/>
    <property type="RefSeq protein sequence ID" value="NP_001001671.3"/>
</dbReference>
<dbReference type="UCSC" id="uc004czj.3">
    <molecule id="Q6ZN16-1"/>
    <property type="organism name" value="human"/>
</dbReference>
<dbReference type="AGR" id="HGNC:31689"/>
<dbReference type="CTD" id="389840"/>
<dbReference type="DisGeNET" id="389840"/>
<dbReference type="GeneCards" id="MAP3K15"/>
<dbReference type="HGNC" id="HGNC:31689">
    <property type="gene designation" value="MAP3K15"/>
</dbReference>
<dbReference type="HPA" id="ENSG00000180815">
    <property type="expression patterns" value="Group enriched (adrenal gland, choroid plexus)"/>
</dbReference>
<dbReference type="MalaCards" id="MAP3K15"/>
<dbReference type="MIM" id="300820">
    <property type="type" value="gene"/>
</dbReference>
<dbReference type="neXtProt" id="NX_Q6ZN16"/>
<dbReference type="OpenTargets" id="ENSG00000180815"/>
<dbReference type="PharmGKB" id="PA134935369"/>
<dbReference type="VEuPathDB" id="HostDB:ENSG00000180815"/>
<dbReference type="eggNOG" id="KOG4279">
    <property type="taxonomic scope" value="Eukaryota"/>
</dbReference>
<dbReference type="GeneTree" id="ENSGT00940000159562"/>
<dbReference type="HOGENOM" id="CLU_048342_0_0_1"/>
<dbReference type="InParanoid" id="Q6ZN16"/>
<dbReference type="OMA" id="CLCGRIC"/>
<dbReference type="OrthoDB" id="275301at2759"/>
<dbReference type="PAN-GO" id="Q6ZN16">
    <property type="GO annotations" value="2 GO annotations based on evolutionary models"/>
</dbReference>
<dbReference type="PhylomeDB" id="Q6ZN16"/>
<dbReference type="TreeFam" id="TF105115"/>
<dbReference type="PathwayCommons" id="Q6ZN16"/>
<dbReference type="SignaLink" id="Q6ZN16"/>
<dbReference type="BioGRID-ORCS" id="389840">
    <property type="hits" value="3 hits in 297 CRISPR screens"/>
</dbReference>
<dbReference type="CD-CODE" id="FBBE2A73">
    <property type="entry name" value="Synthetic Condensate 000275"/>
</dbReference>
<dbReference type="ChiTaRS" id="MAP3K15">
    <property type="organism name" value="human"/>
</dbReference>
<dbReference type="GenomeRNAi" id="389840"/>
<dbReference type="Pharos" id="Q6ZN16">
    <property type="development level" value="Tchem"/>
</dbReference>
<dbReference type="PRO" id="PR:Q6ZN16"/>
<dbReference type="Proteomes" id="UP000005640">
    <property type="component" value="Chromosome X"/>
</dbReference>
<dbReference type="RNAct" id="Q6ZN16">
    <property type="molecule type" value="protein"/>
</dbReference>
<dbReference type="Bgee" id="ENSG00000180815">
    <property type="expression patterns" value="Expressed in adrenal tissue and 80 other cell types or tissues"/>
</dbReference>
<dbReference type="ExpressionAtlas" id="Q6ZN16">
    <property type="expression patterns" value="baseline and differential"/>
</dbReference>
<dbReference type="GO" id="GO:0005524">
    <property type="term" value="F:ATP binding"/>
    <property type="evidence" value="ECO:0007669"/>
    <property type="project" value="UniProtKB-KW"/>
</dbReference>
<dbReference type="GO" id="GO:0004709">
    <property type="term" value="F:MAP kinase kinase kinase activity"/>
    <property type="evidence" value="ECO:0000314"/>
    <property type="project" value="UniProtKB"/>
</dbReference>
<dbReference type="GO" id="GO:0046872">
    <property type="term" value="F:metal ion binding"/>
    <property type="evidence" value="ECO:0007669"/>
    <property type="project" value="UniProtKB-KW"/>
</dbReference>
<dbReference type="GO" id="GO:0106310">
    <property type="term" value="F:protein serine kinase activity"/>
    <property type="evidence" value="ECO:0007669"/>
    <property type="project" value="RHEA"/>
</dbReference>
<dbReference type="GO" id="GO:0007254">
    <property type="term" value="P:JNK cascade"/>
    <property type="evidence" value="ECO:0000318"/>
    <property type="project" value="GO_Central"/>
</dbReference>
<dbReference type="GO" id="GO:0038066">
    <property type="term" value="P:p38MAPK cascade"/>
    <property type="evidence" value="ECO:0000318"/>
    <property type="project" value="GO_Central"/>
</dbReference>
<dbReference type="CDD" id="cd06624">
    <property type="entry name" value="STKc_ASK"/>
    <property type="match status" value="1"/>
</dbReference>
<dbReference type="FunFam" id="1.10.510.10:FF:000054">
    <property type="entry name" value="Mitogen-activated protein kinase kinase kinase 5"/>
    <property type="match status" value="1"/>
</dbReference>
<dbReference type="FunFam" id="3.30.200.20:FF:000067">
    <property type="entry name" value="Mitogen-activated protein kinase kinase kinase 5"/>
    <property type="match status" value="1"/>
</dbReference>
<dbReference type="Gene3D" id="3.30.200.20">
    <property type="entry name" value="Phosphorylase Kinase, domain 1"/>
    <property type="match status" value="1"/>
</dbReference>
<dbReference type="Gene3D" id="1.10.510.10">
    <property type="entry name" value="Transferase(Phosphotransferase) domain 1"/>
    <property type="match status" value="1"/>
</dbReference>
<dbReference type="InterPro" id="IPR046872">
    <property type="entry name" value="DRHyd-ASK"/>
</dbReference>
<dbReference type="InterPro" id="IPR046873">
    <property type="entry name" value="HisK-N-like"/>
</dbReference>
<dbReference type="InterPro" id="IPR011009">
    <property type="entry name" value="Kinase-like_dom_sf"/>
</dbReference>
<dbReference type="InterPro" id="IPR043969">
    <property type="entry name" value="MAP3K_PH"/>
</dbReference>
<dbReference type="InterPro" id="IPR025136">
    <property type="entry name" value="MAP3K_TRAF-bd"/>
</dbReference>
<dbReference type="InterPro" id="IPR000719">
    <property type="entry name" value="Prot_kinase_dom"/>
</dbReference>
<dbReference type="InterPro" id="IPR017441">
    <property type="entry name" value="Protein_kinase_ATP_BS"/>
</dbReference>
<dbReference type="InterPro" id="IPR013761">
    <property type="entry name" value="SAM/pointed_sf"/>
</dbReference>
<dbReference type="InterPro" id="IPR008271">
    <property type="entry name" value="Ser/Thr_kinase_AS"/>
</dbReference>
<dbReference type="PANTHER" id="PTHR11584:SF363">
    <property type="entry name" value="MITOGEN-ACTIVATED PROTEIN KINASE KINASE KINASE 15"/>
    <property type="match status" value="1"/>
</dbReference>
<dbReference type="PANTHER" id="PTHR11584">
    <property type="entry name" value="SERINE/THREONINE PROTEIN KINASE"/>
    <property type="match status" value="1"/>
</dbReference>
<dbReference type="Pfam" id="PF19039">
    <property type="entry name" value="ASK_PH"/>
    <property type="match status" value="1"/>
</dbReference>
<dbReference type="Pfam" id="PF20309">
    <property type="entry name" value="DRHyd-ASK"/>
    <property type="match status" value="1"/>
</dbReference>
<dbReference type="Pfam" id="PF20302">
    <property type="entry name" value="HisK-N-like"/>
    <property type="match status" value="1"/>
</dbReference>
<dbReference type="Pfam" id="PF13281">
    <property type="entry name" value="MAP3K_TRAF_bd"/>
    <property type="match status" value="1"/>
</dbReference>
<dbReference type="Pfam" id="PF00069">
    <property type="entry name" value="Pkinase"/>
    <property type="match status" value="1"/>
</dbReference>
<dbReference type="SMART" id="SM00220">
    <property type="entry name" value="S_TKc"/>
    <property type="match status" value="1"/>
</dbReference>
<dbReference type="SUPFAM" id="SSF56112">
    <property type="entry name" value="Protein kinase-like (PK-like)"/>
    <property type="match status" value="1"/>
</dbReference>
<dbReference type="SUPFAM" id="SSF47769">
    <property type="entry name" value="SAM/Pointed domain"/>
    <property type="match status" value="1"/>
</dbReference>
<dbReference type="PROSITE" id="PS00107">
    <property type="entry name" value="PROTEIN_KINASE_ATP"/>
    <property type="match status" value="1"/>
</dbReference>
<dbReference type="PROSITE" id="PS50011">
    <property type="entry name" value="PROTEIN_KINASE_DOM"/>
    <property type="match status" value="1"/>
</dbReference>
<dbReference type="PROSITE" id="PS00108">
    <property type="entry name" value="PROTEIN_KINASE_ST"/>
    <property type="match status" value="1"/>
</dbReference>
<sequence length="1313" mass="147437">MESGGGNAPAGALGAASESPQCPPPPGVEGAAGPAEPDGAAEGAAGGSGEGESGGGPRRALRAVYVRSESSQGGAAGGPEAGARQCLLRACEAEGAHLTSVPFGELDFGETAVLDAFYDADVAVVDMSDVSRQPSLFYHLGVRESFDMANNVILYHDTDADTALSLKDMVTQKNTASSGNYYFIPYIVTPCADYFCCESDAQRRASEYMQPNWDNILGPLCMPLVDRFISLLKDIHVTSCVYYKETLLNDIRKAREKYQGEELAKELARIKLRMDNTEVLTSDIIINLLLSYRDIQDYDAMVKLVETLEMLPTCDLADQHNIKFHYAFALNRRNSTGDREKALQIMLQVLQSCDHPGPDMFCLCGRIYKDIFLDSDCKDDTSRDSAIEWYRKGFELQSSLYSGINLAVLLIVAGQQFETSLELRKIGVRLNSLLGRKGSLEKMNNYWDVGQFFSVSMLAHDVGKAVQAAERLFKLKPPVWYLRSLVQNLLLIRRFKKTIIEHSPRQERLNFWLDIIFEATNEVTNGLRFPVLVIEPTKVYQPSYVSINNEAEERTVSLWHVSPTEMKQMHEWNFTASSIKGISLSKFDERCCFLYVHDNSDDFQIYFSTEEQCSRFFSLVKEMITNTAGSTVELEGETDGDTLEYEYDHDANGERVVLGKGTYGIVYAGRDLSNQVRIAIKEIPERDSRYSQPLHEEIALHKYLKHRNIVQYLGSVSENGYIKIFMEQVPGGSLSALLRSKWGPMKEPTIKFYTKQILEGLKYLHENQIVHRDIKGDNVLVNTYSGVVKISDFGTSKRLAGVNPCTETFTGTLQYMAPEIIDQGPRGYGAPADIWSLGCTIIEMATSKPPFHELGEPQAAMFKVGMFKIHPEIPEALSAEARAFILSCFEPDPHKRATTAELLREGFLRQVNKGKKNRIAFKPSEGPRGVVLALPTQGEPMATSSSEHGSVSPDSDAQPDALFERTRAPRHHLGHLLSVPDESSALEDRGLASSPEDRDQGLFLLRKDSERRAILYKILWEEQNQVASNLQECVAQSSEELHLSVGHIKQIIGILRDFIRSPEHRVMATTISKLKVDLDFDSSSISQIHLVLFGFQDAVNKILRNHLIRPHWMFAMDNIIRRAVQAAVTILIPELRAHFEPTCETEGVDKDMDEAEEGYPPATGPGQEAQPHQQHLSLQLGELRQETNRLLEHLVEKEREYQNLLRQTLEQKTQELYHLQLKLKSNCITENPAGPYGQRTDKELIDWLRLQGADAKTIEKIVEEGYTLSDILNEITKEDLRYLRLRGGLLCRLWSAVSQYRRAQEASETKDKA</sequence>
<protein>
    <recommendedName>
        <fullName>Mitogen-activated protein kinase kinase kinase 15</fullName>
        <ecNumber evidence="7 8">2.7.11.25</ecNumber>
    </recommendedName>
    <alternativeName>
        <fullName>Apoptosis signal-regulating kinase 3</fullName>
    </alternativeName>
    <alternativeName>
        <fullName>MAPK/ERK kinase kinase 15</fullName>
        <shortName>MEK kinase 15</shortName>
        <shortName>MEKK 15</shortName>
    </alternativeName>
</protein>
<evidence type="ECO:0000250" key="1">
    <source>
        <dbReference type="UniProtKB" id="Q99683"/>
    </source>
</evidence>
<evidence type="ECO:0000255" key="2"/>
<evidence type="ECO:0000255" key="3">
    <source>
        <dbReference type="PROSITE-ProRule" id="PRU00159"/>
    </source>
</evidence>
<evidence type="ECO:0000255" key="4">
    <source>
        <dbReference type="PROSITE-ProRule" id="PRU10027"/>
    </source>
</evidence>
<evidence type="ECO:0000256" key="5">
    <source>
        <dbReference type="SAM" id="MobiDB-lite"/>
    </source>
</evidence>
<evidence type="ECO:0000269" key="6">
    <source>
    </source>
</evidence>
<evidence type="ECO:0000269" key="7">
    <source>
    </source>
</evidence>
<evidence type="ECO:0000269" key="8">
    <source>
    </source>
</evidence>
<evidence type="ECO:0000303" key="9">
    <source>
    </source>
</evidence>
<evidence type="ECO:0000305" key="10"/>
<evidence type="ECO:0007744" key="11">
    <source>
    </source>
</evidence>
<evidence type="ECO:0007829" key="12">
    <source>
        <dbReference type="PDB" id="6V0M"/>
    </source>
</evidence>
<name>M3K15_HUMAN</name>
<proteinExistence type="evidence at protein level"/>
<keyword id="KW-0002">3D-structure</keyword>
<keyword id="KW-0025">Alternative splicing</keyword>
<keyword id="KW-0067">ATP-binding</keyword>
<keyword id="KW-0175">Coiled coil</keyword>
<keyword id="KW-0418">Kinase</keyword>
<keyword id="KW-0460">Magnesium</keyword>
<keyword id="KW-0479">Metal-binding</keyword>
<keyword id="KW-0547">Nucleotide-binding</keyword>
<keyword id="KW-0597">Phosphoprotein</keyword>
<keyword id="KW-1267">Proteomics identification</keyword>
<keyword id="KW-1185">Reference proteome</keyword>
<keyword id="KW-0723">Serine/threonine-protein kinase</keyword>
<keyword id="KW-0808">Transferase</keyword>
<gene>
    <name type="primary">MAP3K15</name>
    <name type="synonym">ASK3</name>
</gene>
<feature type="chain" id="PRO_0000253481" description="Mitogen-activated protein kinase kinase kinase 15">
    <location>
        <begin position="1"/>
        <end position="1313"/>
    </location>
</feature>
<feature type="domain" description="Protein kinase" evidence="3">
    <location>
        <begin position="652"/>
        <end position="908"/>
    </location>
</feature>
<feature type="region of interest" description="Disordered" evidence="5">
    <location>
        <begin position="1"/>
        <end position="58"/>
    </location>
</feature>
<feature type="region of interest" description="Disordered" evidence="5">
    <location>
        <begin position="939"/>
        <end position="958"/>
    </location>
</feature>
<feature type="coiled-coil region" evidence="2">
    <location>
        <begin position="1179"/>
        <end position="1225"/>
    </location>
</feature>
<feature type="compositionally biased region" description="Low complexity" evidence="5">
    <location>
        <begin position="28"/>
        <end position="43"/>
    </location>
</feature>
<feature type="compositionally biased region" description="Gly residues" evidence="5">
    <location>
        <begin position="44"/>
        <end position="57"/>
    </location>
</feature>
<feature type="compositionally biased region" description="Polar residues" evidence="5">
    <location>
        <begin position="942"/>
        <end position="955"/>
    </location>
</feature>
<feature type="active site" description="Proton acceptor" evidence="3 4">
    <location>
        <position position="773"/>
    </location>
</feature>
<feature type="binding site" evidence="3">
    <location>
        <begin position="658"/>
        <end position="666"/>
    </location>
    <ligand>
        <name>ATP</name>
        <dbReference type="ChEBI" id="CHEBI:30616"/>
    </ligand>
</feature>
<feature type="binding site" evidence="3">
    <location>
        <position position="681"/>
    </location>
    <ligand>
        <name>ATP</name>
        <dbReference type="ChEBI" id="CHEBI:30616"/>
    </ligand>
</feature>
<feature type="modified residue" description="Phosphoserine" evidence="11">
    <location>
        <position position="994"/>
    </location>
</feature>
<feature type="splice variant" id="VSP_021038" description="In isoform 2." evidence="9">
    <location>
        <begin position="1"/>
        <end position="565"/>
    </location>
</feature>
<feature type="splice variant" id="VSP_021039" description="In isoform 3." evidence="9">
    <location>
        <begin position="1"/>
        <end position="525"/>
    </location>
</feature>
<feature type="splice variant" id="VSP_021040" description="In isoform 3." evidence="9">
    <original>GLRFPVLVIEPTKVYQPSYVSINNEAEERTVSLWHVSPTEMKQMHEWNFTASSIKGI</original>
    <variation>MACLTHRNETDARMEFYSLFHKGNKAGVQWHDLGSLQPLPPRFKRFSCLSLQSSWDY</variation>
    <location>
        <begin position="526"/>
        <end position="582"/>
    </location>
</feature>
<feature type="sequence variant" id="VAR_040716" description="In dbSNP:rs5909299." evidence="6">
    <original>A</original>
    <variation>T</variation>
    <location>
        <position position="192"/>
    </location>
</feature>
<feature type="sequence variant" id="VAR_040717" description="In dbSNP:rs55916006." evidence="6">
    <original>S</original>
    <variation>N</variation>
    <location>
        <position position="199"/>
    </location>
</feature>
<feature type="sequence variant" id="VAR_040718" description="In dbSNP:rs56338727." evidence="6">
    <original>D</original>
    <variation>H</variation>
    <location>
        <position position="226"/>
    </location>
</feature>
<feature type="sequence variant" id="VAR_040719" description="In a lung squamous cell carcinoma sample; somatic mutation." evidence="6">
    <original>R</original>
    <variation>S</variation>
    <location>
        <position position="255"/>
    </location>
</feature>
<feature type="sequence variant" id="VAR_040720" description="In dbSNP:rs56212339." evidence="6">
    <original>S</original>
    <variation>G</variation>
    <location>
        <position position="456"/>
    </location>
</feature>
<feature type="sequence variant" id="VAR_040721" description="In dbSNP:rs41305349." evidence="6">
    <original>R</original>
    <variation>C</variation>
    <location>
        <position position="494"/>
    </location>
</feature>
<feature type="sequence variant" id="VAR_040722" description="In a lung adenocarcinoma sample; somatic mutation; dbSNP:rs2063704764." evidence="6">
    <original>S</original>
    <variation>L</variation>
    <location>
        <position position="562"/>
    </location>
</feature>
<feature type="sequence variant" id="VAR_040723" description="In a metastatic melanoma sample; somatic mutation." evidence="6">
    <original>R</original>
    <variation>Q</variation>
    <location>
        <position position="677"/>
    </location>
</feature>
<feature type="sequence variant" id="VAR_040724" description="In dbSNP:rs56381411." evidence="6">
    <original>G</original>
    <variation>S</variation>
    <location>
        <position position="838"/>
    </location>
</feature>
<feature type="sequence variant" id="VAR_040725" description="In dbSNP:rs56233219." evidence="6">
    <original>S</original>
    <variation>L</variation>
    <location>
        <position position="993"/>
    </location>
</feature>
<feature type="sequence variant" id="VAR_040726" description="In dbSNP:rs55787622." evidence="6">
    <original>N</original>
    <variation>H</variation>
    <location>
        <position position="1029"/>
    </location>
</feature>
<feature type="sequence variant" id="VAR_040727" description="In a colorectal adenocarcinoma sample; somatic mutation; dbSNP:rs2063287881." evidence="6">
    <original>W</original>
    <variation>R</variation>
    <location>
        <position position="1247"/>
    </location>
</feature>
<feature type="sequence variant" id="VAR_040728" description="In dbSNP:rs15943." evidence="6">
    <original>Q</original>
    <variation>E</variation>
    <location>
        <position position="1251"/>
    </location>
</feature>
<feature type="mutagenesis site" description="Abolished protein kinase activity." evidence="8">
    <original>K</original>
    <variation>M</variation>
    <location>
        <position position="681"/>
    </location>
</feature>
<feature type="sequence conflict" description="In Ref. 1; BAD18622." evidence="10" ref="1">
    <original>F</original>
    <variation>L</variation>
    <location>
        <position position="793"/>
    </location>
</feature>
<feature type="helix" evidence="12">
    <location>
        <begin position="1241"/>
        <end position="1250"/>
    </location>
</feature>
<feature type="helix" evidence="12">
    <location>
        <begin position="1255"/>
        <end position="1263"/>
    </location>
</feature>
<feature type="helix" evidence="12">
    <location>
        <begin position="1268"/>
        <end position="1273"/>
    </location>
</feature>
<feature type="helix" evidence="12">
    <location>
        <begin position="1277"/>
        <end position="1282"/>
    </location>
</feature>
<feature type="helix" evidence="12">
    <location>
        <begin position="1287"/>
        <end position="1307"/>
    </location>
</feature>
<accession>Q6ZN16</accession>
<accession>A2AI49</accession>
<accession>A2AI50</accession>
<accession>A6NJ61</accession>
<accession>Q5JPR4</accession>
<accession>Q6ZMV3</accession>